<comment type="function">
    <text evidence="1">Catalyzes the conversion of lactate to pyruvate.</text>
</comment>
<comment type="catalytic activity">
    <reaction evidence="1">
        <text>(S)-lactate + NAD(+) = pyruvate + NADH + H(+)</text>
        <dbReference type="Rhea" id="RHEA:23444"/>
        <dbReference type="ChEBI" id="CHEBI:15361"/>
        <dbReference type="ChEBI" id="CHEBI:15378"/>
        <dbReference type="ChEBI" id="CHEBI:16651"/>
        <dbReference type="ChEBI" id="CHEBI:57540"/>
        <dbReference type="ChEBI" id="CHEBI:57945"/>
        <dbReference type="EC" id="1.1.1.27"/>
    </reaction>
</comment>
<comment type="activity regulation">
    <text evidence="1">Allosterically activated by fructose 1,6-bisphosphate (FBP).</text>
</comment>
<comment type="pathway">
    <text evidence="1">Fermentation; pyruvate fermentation to lactate; (S)-lactate from pyruvate: step 1/1.</text>
</comment>
<comment type="subunit">
    <text evidence="1">Homotetramer.</text>
</comment>
<comment type="subcellular location">
    <subcellularLocation>
        <location evidence="1">Cytoplasm</location>
    </subcellularLocation>
</comment>
<comment type="similarity">
    <text evidence="1">Belongs to the LDH/MDH superfamily. LDH family.</text>
</comment>
<name>LDH_STRPJ</name>
<sequence length="328" mass="35355">MTSTKQHKKVILVGDGAVGSSYAFALVNQGIAQELGIIEIPQLHEKAVGDALDLSHALAFTSPKKIYAAQYSDCADADLVVITAGAPQKPGETRLDLVGKNLAINKSIVTQVVESGFKGIFLVAANPVDVLTYSTWKFSGFPKERVIGSGTSLDSARFRQALAEKLDVDARSVHAYIMGEHGDSEFAVWSHANIAGVNLEEFLKDTQNVQEAELIELFEGVRDAAYTIINKKGATYYGIAVALARITKAILDDENAVLPLSVFQEGQYGVENVFIGQPAVVGAHGIVRPVNIPLNDAETQKMQASAKELQAIIDEAWKNPEFQEASKN</sequence>
<gene>
    <name evidence="1" type="primary">ldh</name>
    <name type="ordered locus">SPN23F11170</name>
</gene>
<keyword id="KW-0021">Allosteric enzyme</keyword>
<keyword id="KW-0963">Cytoplasm</keyword>
<keyword id="KW-0520">NAD</keyword>
<keyword id="KW-0560">Oxidoreductase</keyword>
<keyword id="KW-0597">Phosphoprotein</keyword>
<evidence type="ECO:0000255" key="1">
    <source>
        <dbReference type="HAMAP-Rule" id="MF_00488"/>
    </source>
</evidence>
<accession>B8ZQ84</accession>
<protein>
    <recommendedName>
        <fullName evidence="1">L-lactate dehydrogenase</fullName>
        <shortName evidence="1">L-LDH</shortName>
        <ecNumber evidence="1">1.1.1.27</ecNumber>
    </recommendedName>
</protein>
<proteinExistence type="inferred from homology"/>
<dbReference type="EC" id="1.1.1.27" evidence="1"/>
<dbReference type="EMBL" id="FM211187">
    <property type="protein sequence ID" value="CAR68926.1"/>
    <property type="molecule type" value="Genomic_DNA"/>
</dbReference>
<dbReference type="RefSeq" id="WP_000204727.1">
    <property type="nucleotide sequence ID" value="NC_011900.1"/>
</dbReference>
<dbReference type="SMR" id="B8ZQ84"/>
<dbReference type="KEGG" id="sne:SPN23F11170"/>
<dbReference type="HOGENOM" id="CLU_045401_1_1_9"/>
<dbReference type="UniPathway" id="UPA00554">
    <property type="reaction ID" value="UER00611"/>
</dbReference>
<dbReference type="GO" id="GO:0005737">
    <property type="term" value="C:cytoplasm"/>
    <property type="evidence" value="ECO:0007669"/>
    <property type="project" value="UniProtKB-SubCell"/>
</dbReference>
<dbReference type="GO" id="GO:0004459">
    <property type="term" value="F:L-lactate dehydrogenase activity"/>
    <property type="evidence" value="ECO:0007669"/>
    <property type="project" value="UniProtKB-UniRule"/>
</dbReference>
<dbReference type="GO" id="GO:0006096">
    <property type="term" value="P:glycolytic process"/>
    <property type="evidence" value="ECO:0007669"/>
    <property type="project" value="UniProtKB-UniRule"/>
</dbReference>
<dbReference type="GO" id="GO:0006089">
    <property type="term" value="P:lactate metabolic process"/>
    <property type="evidence" value="ECO:0007669"/>
    <property type="project" value="TreeGrafter"/>
</dbReference>
<dbReference type="CDD" id="cd05291">
    <property type="entry name" value="HicDH_like"/>
    <property type="match status" value="1"/>
</dbReference>
<dbReference type="FunFam" id="3.40.50.720:FF:000018">
    <property type="entry name" value="Malate dehydrogenase"/>
    <property type="match status" value="1"/>
</dbReference>
<dbReference type="Gene3D" id="3.90.110.10">
    <property type="entry name" value="Lactate dehydrogenase/glycoside hydrolase, family 4, C-terminal"/>
    <property type="match status" value="1"/>
</dbReference>
<dbReference type="Gene3D" id="3.40.50.720">
    <property type="entry name" value="NAD(P)-binding Rossmann-like Domain"/>
    <property type="match status" value="1"/>
</dbReference>
<dbReference type="HAMAP" id="MF_00488">
    <property type="entry name" value="Lactate_dehydrog"/>
    <property type="match status" value="1"/>
</dbReference>
<dbReference type="InterPro" id="IPR001557">
    <property type="entry name" value="L-lactate/malate_DH"/>
</dbReference>
<dbReference type="InterPro" id="IPR011304">
    <property type="entry name" value="L-lactate_DH"/>
</dbReference>
<dbReference type="InterPro" id="IPR018177">
    <property type="entry name" value="L-lactate_DH_AS"/>
</dbReference>
<dbReference type="InterPro" id="IPR022383">
    <property type="entry name" value="Lactate/malate_DH_C"/>
</dbReference>
<dbReference type="InterPro" id="IPR001236">
    <property type="entry name" value="Lactate/malate_DH_N"/>
</dbReference>
<dbReference type="InterPro" id="IPR015955">
    <property type="entry name" value="Lactate_DH/Glyco_Ohase_4_C"/>
</dbReference>
<dbReference type="InterPro" id="IPR036291">
    <property type="entry name" value="NAD(P)-bd_dom_sf"/>
</dbReference>
<dbReference type="NCBIfam" id="TIGR01771">
    <property type="entry name" value="L-LDH-NAD"/>
    <property type="match status" value="1"/>
</dbReference>
<dbReference type="NCBIfam" id="NF000824">
    <property type="entry name" value="PRK00066.1"/>
    <property type="match status" value="1"/>
</dbReference>
<dbReference type="PANTHER" id="PTHR43128">
    <property type="entry name" value="L-2-HYDROXYCARBOXYLATE DEHYDROGENASE (NAD(P)(+))"/>
    <property type="match status" value="1"/>
</dbReference>
<dbReference type="PANTHER" id="PTHR43128:SF16">
    <property type="entry name" value="L-LACTATE DEHYDROGENASE"/>
    <property type="match status" value="1"/>
</dbReference>
<dbReference type="Pfam" id="PF02866">
    <property type="entry name" value="Ldh_1_C"/>
    <property type="match status" value="1"/>
</dbReference>
<dbReference type="Pfam" id="PF00056">
    <property type="entry name" value="Ldh_1_N"/>
    <property type="match status" value="1"/>
</dbReference>
<dbReference type="PIRSF" id="PIRSF000102">
    <property type="entry name" value="Lac_mal_DH"/>
    <property type="match status" value="1"/>
</dbReference>
<dbReference type="PRINTS" id="PR00086">
    <property type="entry name" value="LLDHDRGNASE"/>
</dbReference>
<dbReference type="SUPFAM" id="SSF56327">
    <property type="entry name" value="LDH C-terminal domain-like"/>
    <property type="match status" value="1"/>
</dbReference>
<dbReference type="SUPFAM" id="SSF51735">
    <property type="entry name" value="NAD(P)-binding Rossmann-fold domains"/>
    <property type="match status" value="1"/>
</dbReference>
<dbReference type="PROSITE" id="PS00064">
    <property type="entry name" value="L_LDH"/>
    <property type="match status" value="1"/>
</dbReference>
<organism>
    <name type="scientific">Streptococcus pneumoniae (strain ATCC 700669 / Spain 23F-1)</name>
    <dbReference type="NCBI Taxonomy" id="561276"/>
    <lineage>
        <taxon>Bacteria</taxon>
        <taxon>Bacillati</taxon>
        <taxon>Bacillota</taxon>
        <taxon>Bacilli</taxon>
        <taxon>Lactobacillales</taxon>
        <taxon>Streptococcaceae</taxon>
        <taxon>Streptococcus</taxon>
    </lineage>
</organism>
<reference key="1">
    <citation type="journal article" date="2009" name="J. Bacteriol.">
        <title>Role of conjugative elements in the evolution of the multidrug-resistant pandemic clone Streptococcus pneumoniae Spain23F ST81.</title>
        <authorList>
            <person name="Croucher N.J."/>
            <person name="Walker D."/>
            <person name="Romero P."/>
            <person name="Lennard N."/>
            <person name="Paterson G.K."/>
            <person name="Bason N.C."/>
            <person name="Mitchell A.M."/>
            <person name="Quail M.A."/>
            <person name="Andrew P.W."/>
            <person name="Parkhill J."/>
            <person name="Bentley S.D."/>
            <person name="Mitchell T.J."/>
        </authorList>
    </citation>
    <scope>NUCLEOTIDE SEQUENCE [LARGE SCALE GENOMIC DNA]</scope>
    <source>
        <strain>ATCC 700669 / Spain 23F-1</strain>
    </source>
</reference>
<feature type="chain" id="PRO_1000190780" description="L-lactate dehydrogenase">
    <location>
        <begin position="1"/>
        <end position="328"/>
    </location>
</feature>
<feature type="active site" description="Proton acceptor" evidence="1">
    <location>
        <position position="181"/>
    </location>
</feature>
<feature type="binding site" evidence="1">
    <location>
        <position position="18"/>
    </location>
    <ligand>
        <name>NAD(+)</name>
        <dbReference type="ChEBI" id="CHEBI:57540"/>
    </ligand>
</feature>
<feature type="binding site" evidence="1">
    <location>
        <position position="39"/>
    </location>
    <ligand>
        <name>NAD(+)</name>
        <dbReference type="ChEBI" id="CHEBI:57540"/>
    </ligand>
</feature>
<feature type="binding site" evidence="1">
    <location>
        <position position="46"/>
    </location>
    <ligand>
        <name>NAD(+)</name>
        <dbReference type="ChEBI" id="CHEBI:57540"/>
    </ligand>
</feature>
<feature type="binding site" evidence="1">
    <location>
        <position position="71"/>
    </location>
    <ligand>
        <name>NAD(+)</name>
        <dbReference type="ChEBI" id="CHEBI:57540"/>
    </ligand>
</feature>
<feature type="binding site" evidence="1">
    <location>
        <begin position="85"/>
        <end position="86"/>
    </location>
    <ligand>
        <name>NAD(+)</name>
        <dbReference type="ChEBI" id="CHEBI:57540"/>
    </ligand>
</feature>
<feature type="binding site" evidence="1">
    <location>
        <position position="88"/>
    </location>
    <ligand>
        <name>substrate</name>
    </ligand>
</feature>
<feature type="binding site" evidence="1">
    <location>
        <position position="94"/>
    </location>
    <ligand>
        <name>substrate</name>
    </ligand>
</feature>
<feature type="binding site" evidence="1">
    <location>
        <position position="107"/>
    </location>
    <ligand>
        <name>NAD(+)</name>
        <dbReference type="ChEBI" id="CHEBI:57540"/>
    </ligand>
</feature>
<feature type="binding site" evidence="1">
    <location>
        <begin position="124"/>
        <end position="126"/>
    </location>
    <ligand>
        <name>NAD(+)</name>
        <dbReference type="ChEBI" id="CHEBI:57540"/>
    </ligand>
</feature>
<feature type="binding site" evidence="1">
    <location>
        <begin position="126"/>
        <end position="129"/>
    </location>
    <ligand>
        <name>substrate</name>
    </ligand>
</feature>
<feature type="binding site" evidence="1">
    <location>
        <position position="149"/>
    </location>
    <ligand>
        <name>NAD(+)</name>
        <dbReference type="ChEBI" id="CHEBI:57540"/>
    </ligand>
</feature>
<feature type="binding site" evidence="1">
    <location>
        <begin position="154"/>
        <end position="157"/>
    </location>
    <ligand>
        <name>substrate</name>
    </ligand>
</feature>
<feature type="binding site" evidence="1">
    <location>
        <position position="159"/>
    </location>
    <ligand>
        <name>beta-D-fructose 1,6-bisphosphate</name>
        <dbReference type="ChEBI" id="CHEBI:32966"/>
        <note>allosteric activator</note>
    </ligand>
</feature>
<feature type="binding site" evidence="1">
    <location>
        <position position="174"/>
    </location>
    <ligand>
        <name>beta-D-fructose 1,6-bisphosphate</name>
        <dbReference type="ChEBI" id="CHEBI:32966"/>
        <note>allosteric activator</note>
    </ligand>
</feature>
<feature type="binding site" evidence="1">
    <location>
        <position position="235"/>
    </location>
    <ligand>
        <name>substrate</name>
    </ligand>
</feature>
<feature type="modified residue" description="Phosphotyrosine" evidence="1">
    <location>
        <position position="226"/>
    </location>
</feature>